<gene>
    <name type="primary">ybaK</name>
    <name type="ordered locus">SF0426</name>
    <name type="ordered locus">S0433</name>
</gene>
<evidence type="ECO:0000250" key="1"/>
<evidence type="ECO:0000305" key="2"/>
<accession>P0AAR4</accession>
<accession>P37175</accession>
<accession>P77281</accession>
<feature type="chain" id="PRO_0000168622" description="Cys-tRNA(Pro)/Cys-tRNA(Cys) deacylase YbaK">
    <location>
        <begin position="1"/>
        <end position="159"/>
    </location>
</feature>
<feature type="site" description="Participates in proton transfer during catalysis" evidence="1">
    <location>
        <position position="29"/>
    </location>
</feature>
<organism>
    <name type="scientific">Shigella flexneri</name>
    <dbReference type="NCBI Taxonomy" id="623"/>
    <lineage>
        <taxon>Bacteria</taxon>
        <taxon>Pseudomonadati</taxon>
        <taxon>Pseudomonadota</taxon>
        <taxon>Gammaproteobacteria</taxon>
        <taxon>Enterobacterales</taxon>
        <taxon>Enterobacteriaceae</taxon>
        <taxon>Shigella</taxon>
    </lineage>
</organism>
<keyword id="KW-0963">Cytoplasm</keyword>
<keyword id="KW-0456">Lyase</keyword>
<keyword id="KW-0648">Protein biosynthesis</keyword>
<keyword id="KW-1185">Reference proteome</keyword>
<comment type="function">
    <text evidence="1">Functions in trans to edit the amino acid from incorrectly charged Cys-tRNA(Pro) via a Cys-tRNA(Pro) deacylase activity.</text>
</comment>
<comment type="subcellular location">
    <subcellularLocation>
        <location evidence="1">Cytoplasm</location>
    </subcellularLocation>
</comment>
<comment type="miscellaneous">
    <text evidence="1">Reaction mechanism involves exclusion of catalytic water from the active site and substrate-mediated catalysis: the sulfhydryl side chain of the Cys substrate acts as a nucleophile and attacks the carbonyl center of the ester bond, leading to the cleavage of the Cys-tRNA ester bond and formation of a cyclic cysteine thiolactone intermediate. In contrast, the INS editing domain of ProRS catalyzes Ala-tRNA(Pro) hydrolysis via nucleophilic attack by a catalytic water molecule (By similarity).</text>
</comment>
<comment type="similarity">
    <text evidence="2">Belongs to the prolyl-tRNA editing family. YbaK/EbsC subfamily.</text>
</comment>
<reference key="1">
    <citation type="journal article" date="2002" name="Nucleic Acids Res.">
        <title>Genome sequence of Shigella flexneri 2a: insights into pathogenicity through comparison with genomes of Escherichia coli K12 and O157.</title>
        <authorList>
            <person name="Jin Q."/>
            <person name="Yuan Z."/>
            <person name="Xu J."/>
            <person name="Wang Y."/>
            <person name="Shen Y."/>
            <person name="Lu W."/>
            <person name="Wang J."/>
            <person name="Liu H."/>
            <person name="Yang J."/>
            <person name="Yang F."/>
            <person name="Zhang X."/>
            <person name="Zhang J."/>
            <person name="Yang G."/>
            <person name="Wu H."/>
            <person name="Qu D."/>
            <person name="Dong J."/>
            <person name="Sun L."/>
            <person name="Xue Y."/>
            <person name="Zhao A."/>
            <person name="Gao Y."/>
            <person name="Zhu J."/>
            <person name="Kan B."/>
            <person name="Ding K."/>
            <person name="Chen S."/>
            <person name="Cheng H."/>
            <person name="Yao Z."/>
            <person name="He B."/>
            <person name="Chen R."/>
            <person name="Ma D."/>
            <person name="Qiang B."/>
            <person name="Wen Y."/>
            <person name="Hou Y."/>
            <person name="Yu J."/>
        </authorList>
    </citation>
    <scope>NUCLEOTIDE SEQUENCE [LARGE SCALE GENOMIC DNA]</scope>
    <source>
        <strain>301 / Serotype 2a</strain>
    </source>
</reference>
<reference key="2">
    <citation type="journal article" date="2003" name="Infect. Immun.">
        <title>Complete genome sequence and comparative genomics of Shigella flexneri serotype 2a strain 2457T.</title>
        <authorList>
            <person name="Wei J."/>
            <person name="Goldberg M.B."/>
            <person name="Burland V."/>
            <person name="Venkatesan M.M."/>
            <person name="Deng W."/>
            <person name="Fournier G."/>
            <person name="Mayhew G.F."/>
            <person name="Plunkett G. III"/>
            <person name="Rose D.J."/>
            <person name="Darling A."/>
            <person name="Mau B."/>
            <person name="Perna N.T."/>
            <person name="Payne S.M."/>
            <person name="Runyen-Janecky L.J."/>
            <person name="Zhou S."/>
            <person name="Schwartz D.C."/>
            <person name="Blattner F.R."/>
        </authorList>
    </citation>
    <scope>NUCLEOTIDE SEQUENCE [LARGE SCALE GENOMIC DNA]</scope>
    <source>
        <strain>ATCC 700930 / 2457T / Serotype 2a</strain>
    </source>
</reference>
<proteinExistence type="inferred from homology"/>
<protein>
    <recommendedName>
        <fullName>Cys-tRNA(Pro)/Cys-tRNA(Cys) deacylase YbaK</fullName>
        <ecNumber>4.2.-.-</ecNumber>
    </recommendedName>
</protein>
<name>YBAK_SHIFL</name>
<dbReference type="EC" id="4.2.-.-"/>
<dbReference type="EMBL" id="AE005674">
    <property type="protein sequence ID" value="AAN42081.1"/>
    <property type="molecule type" value="Genomic_DNA"/>
</dbReference>
<dbReference type="EMBL" id="AE014073">
    <property type="protein sequence ID" value="AAP15958.1"/>
    <property type="molecule type" value="Genomic_DNA"/>
</dbReference>
<dbReference type="RefSeq" id="NP_706374.1">
    <property type="nucleotide sequence ID" value="NC_004337.2"/>
</dbReference>
<dbReference type="RefSeq" id="WP_000186631.1">
    <property type="nucleotide sequence ID" value="NZ_WPGW01000015.1"/>
</dbReference>
<dbReference type="SMR" id="P0AAR4"/>
<dbReference type="STRING" id="198214.SF0426"/>
<dbReference type="PaxDb" id="198214-SF0426"/>
<dbReference type="GeneID" id="1027738"/>
<dbReference type="GeneID" id="75203147"/>
<dbReference type="KEGG" id="sfl:SF0426"/>
<dbReference type="KEGG" id="sfx:S0433"/>
<dbReference type="PATRIC" id="fig|198214.7.peg.488"/>
<dbReference type="HOGENOM" id="CLU_094875_1_1_6"/>
<dbReference type="Proteomes" id="UP000001006">
    <property type="component" value="Chromosome"/>
</dbReference>
<dbReference type="Proteomes" id="UP000002673">
    <property type="component" value="Chromosome"/>
</dbReference>
<dbReference type="GO" id="GO:0005737">
    <property type="term" value="C:cytoplasm"/>
    <property type="evidence" value="ECO:0007669"/>
    <property type="project" value="UniProtKB-SubCell"/>
</dbReference>
<dbReference type="GO" id="GO:0002161">
    <property type="term" value="F:aminoacyl-tRNA deacylase activity"/>
    <property type="evidence" value="ECO:0007669"/>
    <property type="project" value="InterPro"/>
</dbReference>
<dbReference type="GO" id="GO:0016829">
    <property type="term" value="F:lyase activity"/>
    <property type="evidence" value="ECO:0007669"/>
    <property type="project" value="UniProtKB-KW"/>
</dbReference>
<dbReference type="GO" id="GO:0006412">
    <property type="term" value="P:translation"/>
    <property type="evidence" value="ECO:0007669"/>
    <property type="project" value="UniProtKB-KW"/>
</dbReference>
<dbReference type="CDD" id="cd00002">
    <property type="entry name" value="YbaK_deacylase"/>
    <property type="match status" value="1"/>
</dbReference>
<dbReference type="FunFam" id="3.90.960.10:FF:000002">
    <property type="entry name" value="Cys-tRNA(Pro)/Cys-tRNA(Cys) deacylase"/>
    <property type="match status" value="1"/>
</dbReference>
<dbReference type="Gene3D" id="3.90.960.10">
    <property type="entry name" value="YbaK/aminoacyl-tRNA synthetase-associated domain"/>
    <property type="match status" value="1"/>
</dbReference>
<dbReference type="InterPro" id="IPR004369">
    <property type="entry name" value="Prolyl-tRNA_editing_YbaK/EbsC"/>
</dbReference>
<dbReference type="InterPro" id="IPR036754">
    <property type="entry name" value="YbaK/aa-tRNA-synt-asso_dom_sf"/>
</dbReference>
<dbReference type="InterPro" id="IPR007214">
    <property type="entry name" value="YbaK/aa-tRNA-synth-assoc-dom"/>
</dbReference>
<dbReference type="NCBIfam" id="NF007951">
    <property type="entry name" value="PRK10670.1"/>
    <property type="match status" value="1"/>
</dbReference>
<dbReference type="NCBIfam" id="TIGR00011">
    <property type="entry name" value="YbaK_EbsC"/>
    <property type="match status" value="1"/>
</dbReference>
<dbReference type="PANTHER" id="PTHR30411:SF0">
    <property type="entry name" value="CYS-TRNA(PRO)_CYS-TRNA(CYS) DEACYLASE YBAK"/>
    <property type="match status" value="1"/>
</dbReference>
<dbReference type="PANTHER" id="PTHR30411">
    <property type="entry name" value="CYTOPLASMIC PROTEIN"/>
    <property type="match status" value="1"/>
</dbReference>
<dbReference type="Pfam" id="PF04073">
    <property type="entry name" value="tRNA_edit"/>
    <property type="match status" value="1"/>
</dbReference>
<dbReference type="PIRSF" id="PIRSF006181">
    <property type="entry name" value="EbsC_YbaK"/>
    <property type="match status" value="1"/>
</dbReference>
<dbReference type="SUPFAM" id="SSF55826">
    <property type="entry name" value="YbaK/ProRS associated domain"/>
    <property type="match status" value="1"/>
</dbReference>
<sequence length="159" mass="17093">MTPAVKLLEKNKISFQIHTYEHDPAETNFGDEVVKKLGLNPDQVYKTLLVAVNGDMKHLAVAVTPVAGQLDLKKVAKALGAKKVEMADPMVAQRSTGYLVGGISPLGQKKRLPTIIDAPAQEFATIYVSGGKRGLDIELAAGDLAKILDAKFADIARRD</sequence>